<feature type="chain" id="PRO_0000329336" description="Adenine phosphoribosyltransferase">
    <location>
        <begin position="1"/>
        <end position="184"/>
    </location>
</feature>
<comment type="function">
    <text evidence="1">Catalyzes a salvage reaction resulting in the formation of AMP, that is energically less costly than de novo synthesis.</text>
</comment>
<comment type="catalytic activity">
    <reaction evidence="1">
        <text>AMP + diphosphate = 5-phospho-alpha-D-ribose 1-diphosphate + adenine</text>
        <dbReference type="Rhea" id="RHEA:16609"/>
        <dbReference type="ChEBI" id="CHEBI:16708"/>
        <dbReference type="ChEBI" id="CHEBI:33019"/>
        <dbReference type="ChEBI" id="CHEBI:58017"/>
        <dbReference type="ChEBI" id="CHEBI:456215"/>
        <dbReference type="EC" id="2.4.2.7"/>
    </reaction>
</comment>
<comment type="pathway">
    <text evidence="1">Purine metabolism; AMP biosynthesis via salvage pathway; AMP from adenine: step 1/1.</text>
</comment>
<comment type="subunit">
    <text evidence="1">Homodimer.</text>
</comment>
<comment type="subcellular location">
    <subcellularLocation>
        <location evidence="1">Cytoplasm</location>
    </subcellularLocation>
</comment>
<comment type="similarity">
    <text evidence="1">Belongs to the purine/pyrimidine phosphoribosyltransferase family.</text>
</comment>
<protein>
    <recommendedName>
        <fullName evidence="1">Adenine phosphoribosyltransferase</fullName>
        <shortName evidence="1">APRT</shortName>
        <ecNumber evidence="1">2.4.2.7</ecNumber>
    </recommendedName>
</protein>
<organism>
    <name type="scientific">Blochmanniella pennsylvanica (strain BPEN)</name>
    <dbReference type="NCBI Taxonomy" id="291272"/>
    <lineage>
        <taxon>Bacteria</taxon>
        <taxon>Pseudomonadati</taxon>
        <taxon>Pseudomonadota</taxon>
        <taxon>Gammaproteobacteria</taxon>
        <taxon>Enterobacterales</taxon>
        <taxon>Enterobacteriaceae</taxon>
        <taxon>ant endosymbionts</taxon>
        <taxon>Candidatus Blochmanniella</taxon>
    </lineage>
</organism>
<reference key="1">
    <citation type="journal article" date="2005" name="Genome Res.">
        <title>Genome sequence of Blochmannia pennsylvanicus indicates parallel evolutionary trends among bacterial mutualists of insects.</title>
        <authorList>
            <person name="Degnan P.H."/>
            <person name="Lazarus A.B."/>
            <person name="Wernegreen J.J."/>
        </authorList>
    </citation>
    <scope>NUCLEOTIDE SEQUENCE [LARGE SCALE GENOMIC DNA]</scope>
    <source>
        <strain>BPEN</strain>
    </source>
</reference>
<name>APT_BLOPB</name>
<accession>Q493A5</accession>
<keyword id="KW-0963">Cytoplasm</keyword>
<keyword id="KW-0328">Glycosyltransferase</keyword>
<keyword id="KW-0660">Purine salvage</keyword>
<keyword id="KW-1185">Reference proteome</keyword>
<keyword id="KW-0808">Transferase</keyword>
<gene>
    <name evidence="1" type="primary">apt</name>
    <name type="ordered locus">BPEN_308</name>
</gene>
<evidence type="ECO:0000255" key="1">
    <source>
        <dbReference type="HAMAP-Rule" id="MF_00004"/>
    </source>
</evidence>
<proteinExistence type="inferred from homology"/>
<sequence length="184" mass="20457">MTNVTDQQLELIKKSIQFVPNYPKKGILFRDITELLKNPQAYSASITLLAYYYRNHKLTKVVGIEARGFLFSAPLALILKLGFIPARKSGRLPRDTIREPYILEYDNGFLEIHTDSITPGDQVLIIDDLLATGGTIAAAVKLIRRLGGEVNHAGFIIDLENLGGKSLLKEIGINSYSLVTFSNH</sequence>
<dbReference type="EC" id="2.4.2.7" evidence="1"/>
<dbReference type="EMBL" id="CP000016">
    <property type="protein sequence ID" value="AAZ40939.1"/>
    <property type="molecule type" value="Genomic_DNA"/>
</dbReference>
<dbReference type="RefSeq" id="WP_011282846.1">
    <property type="nucleotide sequence ID" value="NC_007292.1"/>
</dbReference>
<dbReference type="SMR" id="Q493A5"/>
<dbReference type="STRING" id="291272.BPEN_308"/>
<dbReference type="KEGG" id="bpn:BPEN_308"/>
<dbReference type="eggNOG" id="COG0503">
    <property type="taxonomic scope" value="Bacteria"/>
</dbReference>
<dbReference type="HOGENOM" id="CLU_063339_3_0_6"/>
<dbReference type="OrthoDB" id="9803963at2"/>
<dbReference type="UniPathway" id="UPA00588">
    <property type="reaction ID" value="UER00646"/>
</dbReference>
<dbReference type="Proteomes" id="UP000007794">
    <property type="component" value="Chromosome"/>
</dbReference>
<dbReference type="GO" id="GO:0005737">
    <property type="term" value="C:cytoplasm"/>
    <property type="evidence" value="ECO:0007669"/>
    <property type="project" value="UniProtKB-SubCell"/>
</dbReference>
<dbReference type="GO" id="GO:0002055">
    <property type="term" value="F:adenine binding"/>
    <property type="evidence" value="ECO:0007669"/>
    <property type="project" value="TreeGrafter"/>
</dbReference>
<dbReference type="GO" id="GO:0003999">
    <property type="term" value="F:adenine phosphoribosyltransferase activity"/>
    <property type="evidence" value="ECO:0007669"/>
    <property type="project" value="UniProtKB-UniRule"/>
</dbReference>
<dbReference type="GO" id="GO:0016208">
    <property type="term" value="F:AMP binding"/>
    <property type="evidence" value="ECO:0007669"/>
    <property type="project" value="TreeGrafter"/>
</dbReference>
<dbReference type="GO" id="GO:0006168">
    <property type="term" value="P:adenine salvage"/>
    <property type="evidence" value="ECO:0007669"/>
    <property type="project" value="InterPro"/>
</dbReference>
<dbReference type="GO" id="GO:0044209">
    <property type="term" value="P:AMP salvage"/>
    <property type="evidence" value="ECO:0007669"/>
    <property type="project" value="UniProtKB-UniRule"/>
</dbReference>
<dbReference type="GO" id="GO:0006166">
    <property type="term" value="P:purine ribonucleoside salvage"/>
    <property type="evidence" value="ECO:0007669"/>
    <property type="project" value="UniProtKB-KW"/>
</dbReference>
<dbReference type="CDD" id="cd06223">
    <property type="entry name" value="PRTases_typeI"/>
    <property type="match status" value="1"/>
</dbReference>
<dbReference type="FunFam" id="3.40.50.2020:FF:000004">
    <property type="entry name" value="Adenine phosphoribosyltransferase"/>
    <property type="match status" value="1"/>
</dbReference>
<dbReference type="Gene3D" id="3.40.50.2020">
    <property type="match status" value="1"/>
</dbReference>
<dbReference type="HAMAP" id="MF_00004">
    <property type="entry name" value="Aden_phosphoribosyltr"/>
    <property type="match status" value="1"/>
</dbReference>
<dbReference type="InterPro" id="IPR005764">
    <property type="entry name" value="Ade_phspho_trans"/>
</dbReference>
<dbReference type="InterPro" id="IPR000836">
    <property type="entry name" value="PRibTrfase_dom"/>
</dbReference>
<dbReference type="InterPro" id="IPR029057">
    <property type="entry name" value="PRTase-like"/>
</dbReference>
<dbReference type="InterPro" id="IPR050054">
    <property type="entry name" value="UPRTase/APRTase"/>
</dbReference>
<dbReference type="NCBIfam" id="TIGR01090">
    <property type="entry name" value="apt"/>
    <property type="match status" value="1"/>
</dbReference>
<dbReference type="NCBIfam" id="NF002632">
    <property type="entry name" value="PRK02304.1-1"/>
    <property type="match status" value="1"/>
</dbReference>
<dbReference type="NCBIfam" id="NF002634">
    <property type="entry name" value="PRK02304.1-3"/>
    <property type="match status" value="1"/>
</dbReference>
<dbReference type="NCBIfam" id="NF002636">
    <property type="entry name" value="PRK02304.1-5"/>
    <property type="match status" value="1"/>
</dbReference>
<dbReference type="PANTHER" id="PTHR32315">
    <property type="entry name" value="ADENINE PHOSPHORIBOSYLTRANSFERASE"/>
    <property type="match status" value="1"/>
</dbReference>
<dbReference type="PANTHER" id="PTHR32315:SF3">
    <property type="entry name" value="ADENINE PHOSPHORIBOSYLTRANSFERASE"/>
    <property type="match status" value="1"/>
</dbReference>
<dbReference type="Pfam" id="PF00156">
    <property type="entry name" value="Pribosyltran"/>
    <property type="match status" value="1"/>
</dbReference>
<dbReference type="SUPFAM" id="SSF53271">
    <property type="entry name" value="PRTase-like"/>
    <property type="match status" value="1"/>
</dbReference>
<dbReference type="PROSITE" id="PS00103">
    <property type="entry name" value="PUR_PYR_PR_TRANSFER"/>
    <property type="match status" value="1"/>
</dbReference>